<evidence type="ECO:0000250" key="1"/>
<evidence type="ECO:0000250" key="2">
    <source>
        <dbReference type="UniProtKB" id="P07371"/>
    </source>
</evidence>
<evidence type="ECO:0000250" key="3">
    <source>
        <dbReference type="UniProtKB" id="P12333"/>
    </source>
</evidence>
<evidence type="ECO:0000255" key="4"/>
<evidence type="ECO:0000305" key="5"/>
<keyword id="KW-0007">Acetylation</keyword>
<keyword id="KW-0148">Chlorophyll</keyword>
<keyword id="KW-0150">Chloroplast</keyword>
<keyword id="KW-0157">Chromophore</keyword>
<keyword id="KW-0460">Magnesium</keyword>
<keyword id="KW-0472">Membrane</keyword>
<keyword id="KW-0479">Metal-binding</keyword>
<keyword id="KW-0597">Phosphoprotein</keyword>
<keyword id="KW-0602">Photosynthesis</keyword>
<keyword id="KW-0603">Photosystem I</keyword>
<keyword id="KW-0604">Photosystem II</keyword>
<keyword id="KW-0934">Plastid</keyword>
<keyword id="KW-0793">Thylakoid</keyword>
<keyword id="KW-0809">Transit peptide</keyword>
<keyword id="KW-0812">Transmembrane</keyword>
<keyword id="KW-1133">Transmembrane helix</keyword>
<protein>
    <recommendedName>
        <fullName>Chlorophyll a-b binding protein type 2 member 1A, chloroplastic</fullName>
    </recommendedName>
    <alternativeName>
        <fullName>Chlorophyll a-b binding protein type II 1A</fullName>
        <shortName>CAB</shortName>
    </alternativeName>
    <alternativeName>
        <fullName>LHCP</fullName>
    </alternativeName>
</protein>
<comment type="function">
    <text>The light-harvesting complex (LHC) functions as a light receptor, it captures and delivers excitation energy to photosystems with which it is closely associated.</text>
</comment>
<comment type="cofactor">
    <text evidence="1">Binds at least 14 chlorophylls (8 Chl-a and 6 Chl-b) and carotenoids such as lutein and neoxanthin.</text>
</comment>
<comment type="subunit">
    <text>The LHC complex consists of chlorophyll a-b binding proteins.</text>
</comment>
<comment type="subcellular location">
    <subcellularLocation>
        <location>Plastid</location>
        <location>Chloroplast thylakoid membrane</location>
        <topology>Multi-pass membrane protein</topology>
    </subcellularLocation>
</comment>
<comment type="domain">
    <text>The N-terminus of the protein extends into the stroma where it is involved with adhesion of granal membranes and post-translational modifications; both are believed to mediate the distribution of excitation energy between photosystems I and II.</text>
</comment>
<comment type="PTM">
    <text evidence="1">Photoregulated by reversible phosphorylation of its threonine residues.</text>
</comment>
<comment type="similarity">
    <text evidence="5">Belongs to the light-harvesting chlorophyll a/b-binding (LHC) protein family.</text>
</comment>
<proteinExistence type="evidence at transcript level"/>
<reference key="1">
    <citation type="journal article" date="1990" name="Plant Mol. Biol.">
        <title>Type I and type II genes for the chlorophyll a/b-binding protein in the gymnosperm Pinus sylvestris (Scots pine): cDNA cloning and sequence analysis.</title>
        <authorList>
            <person name="Jansson S."/>
            <person name="Gustatsson P."/>
        </authorList>
    </citation>
    <scope>NUCLEOTIDE SEQUENCE [MRNA]</scope>
    <source>
        <tissue>Cotyledon</tissue>
    </source>
</reference>
<organism>
    <name type="scientific">Pinus sylvestris</name>
    <name type="common">Scotch pine</name>
    <dbReference type="NCBI Taxonomy" id="3349"/>
    <lineage>
        <taxon>Eukaryota</taxon>
        <taxon>Viridiplantae</taxon>
        <taxon>Streptophyta</taxon>
        <taxon>Embryophyta</taxon>
        <taxon>Tracheophyta</taxon>
        <taxon>Spermatophyta</taxon>
        <taxon>Pinopsida</taxon>
        <taxon>Pinidae</taxon>
        <taxon>Conifers I</taxon>
        <taxon>Pinales</taxon>
        <taxon>Pinaceae</taxon>
        <taxon>Pinus</taxon>
        <taxon>Pinus subgen. Pinus</taxon>
    </lineage>
</organism>
<sequence>MATTMASCGIGSRCAFAGAQLSSVKPQNNQLLGVGGAHGEARLTMRKATGKKSVAASIDSPWYGPDRVLYLGPFSGEPPSYLTGEFPGDYGWDTAGLSADPETFAKNRELEVIHSRWAMLGALGCVFPELLARNGVKFGEAVWFKAGAQIFSEGGLDYLGSPQLIHAQSILAIWACQVILMGAIEGYRVAGGPLGEVTDPIYPGGNFDPLGLADDPDAFAELKVKEIKNGRLAMFSMFGFFVQAIVTGKGPIENLADHLADPVNNNAWAYATNFVPGK</sequence>
<feature type="transit peptide" description="Chloroplast" evidence="5">
    <location>
        <begin position="1"/>
        <end position="45"/>
    </location>
</feature>
<feature type="chain" id="PRO_0000003690" description="Chlorophyll a-b binding protein type 2 member 1A, chloroplastic">
    <location>
        <begin position="46"/>
        <end position="278"/>
    </location>
</feature>
<feature type="transmembrane region" description="Helical" evidence="4">
    <location>
        <begin position="112"/>
        <end position="132"/>
    </location>
</feature>
<feature type="transmembrane region" description="Helical" evidence="4">
    <location>
        <begin position="164"/>
        <end position="184"/>
    </location>
</feature>
<feature type="transmembrane region" description="Helical" evidence="4">
    <location>
        <begin position="232"/>
        <end position="252"/>
    </location>
</feature>
<feature type="binding site" description="axial binding residue" evidence="3">
    <location>
        <position position="70"/>
    </location>
    <ligand>
        <name>chlorophyll b</name>
        <dbReference type="ChEBI" id="CHEBI:61721"/>
        <label>1</label>
    </ligand>
    <ligandPart>
        <name>Mg</name>
        <dbReference type="ChEBI" id="CHEBI:25107"/>
    </ligandPart>
</feature>
<feature type="binding site" evidence="1">
    <location>
        <position position="92"/>
    </location>
    <ligand>
        <name>chlorophyll a</name>
        <dbReference type="ChEBI" id="CHEBI:58416"/>
        <label>1</label>
    </ligand>
</feature>
<feature type="binding site" evidence="1">
    <location>
        <position position="98"/>
    </location>
    <ligand>
        <name>chlorophyll a</name>
        <dbReference type="ChEBI" id="CHEBI:58416"/>
        <label>1</label>
    </ligand>
</feature>
<feature type="binding site" description="axial binding residue" evidence="3">
    <location>
        <position position="111"/>
    </location>
    <ligand>
        <name>chlorophyll a</name>
        <dbReference type="ChEBI" id="CHEBI:58416"/>
        <label>1</label>
    </ligand>
    <ligandPart>
        <name>Mg</name>
        <dbReference type="ChEBI" id="CHEBI:25107"/>
    </ligandPart>
</feature>
<feature type="binding site" description="axial binding residue" evidence="3">
    <location>
        <position position="114"/>
    </location>
    <ligand>
        <name>chlorophyll a</name>
        <dbReference type="ChEBI" id="CHEBI:58416"/>
        <label>2</label>
    </ligand>
    <ligandPart>
        <name>Mg</name>
        <dbReference type="ChEBI" id="CHEBI:25107"/>
    </ligandPart>
</feature>
<feature type="binding site" evidence="1">
    <location>
        <position position="116"/>
    </location>
    <ligand>
        <name>chlorophyll b</name>
        <dbReference type="ChEBI" id="CHEBI:61721"/>
        <label>2</label>
    </ligand>
</feature>
<feature type="binding site" evidence="1">
    <location>
        <position position="149"/>
    </location>
    <ligand>
        <name>chlorophyll a</name>
        <dbReference type="ChEBI" id="CHEBI:58416"/>
        <label>3</label>
    </ligand>
</feature>
<feature type="binding site" evidence="1">
    <location>
        <position position="159"/>
    </location>
    <ligand>
        <name>chlorophyll a</name>
        <dbReference type="ChEBI" id="CHEBI:58416"/>
        <label>3</label>
    </ligand>
</feature>
<feature type="binding site" description="axial binding residue" evidence="1">
    <location>
        <position position="165"/>
    </location>
    <ligand>
        <name>chlorophyll b</name>
        <dbReference type="ChEBI" id="CHEBI:61721"/>
        <label>2</label>
    </ligand>
    <ligandPart>
        <name>Mg</name>
        <dbReference type="ChEBI" id="CHEBI:25107"/>
    </ligandPart>
</feature>
<feature type="binding site" evidence="1">
    <location>
        <position position="169"/>
    </location>
    <ligand>
        <name>chlorophyll b</name>
        <dbReference type="ChEBI" id="CHEBI:61721"/>
        <label>3</label>
    </ligand>
</feature>
<feature type="binding site" evidence="1">
    <location>
        <position position="177"/>
    </location>
    <ligand>
        <name>chlorophyll b</name>
        <dbReference type="ChEBI" id="CHEBI:61721"/>
        <label>4</label>
    </ligand>
</feature>
<feature type="binding site" evidence="2">
    <location>
        <position position="177"/>
    </location>
    <ligand>
        <name>chlorophyll b</name>
        <dbReference type="ChEBI" id="CHEBI:61721"/>
        <label>5</label>
    </ligand>
</feature>
<feature type="binding site" description="axial binding residue" evidence="3">
    <location>
        <position position="185"/>
    </location>
    <ligand>
        <name>chlorophyll b</name>
        <dbReference type="ChEBI" id="CHEBI:61721"/>
        <label>3</label>
    </ligand>
    <ligandPart>
        <name>Mg</name>
        <dbReference type="ChEBI" id="CHEBI:25107"/>
    </ligandPart>
</feature>
<feature type="binding site" evidence="1">
    <location>
        <position position="188"/>
    </location>
    <ligand>
        <name>chlorophyll b</name>
        <dbReference type="ChEBI" id="CHEBI:61721"/>
        <label>4</label>
    </ligand>
</feature>
<feature type="binding site" evidence="1">
    <location>
        <position position="194"/>
    </location>
    <ligand>
        <name>chlorophyll b</name>
        <dbReference type="ChEBI" id="CHEBI:61721"/>
        <label>2</label>
    </ligand>
</feature>
<feature type="binding site" evidence="1">
    <location>
        <position position="225"/>
    </location>
    <ligand>
        <name>chlorophyll a</name>
        <dbReference type="ChEBI" id="CHEBI:58416"/>
        <label>5</label>
    </ligand>
</feature>
<feature type="binding site" description="axial binding residue" evidence="3">
    <location>
        <position position="226"/>
    </location>
    <ligand>
        <name>chlorophyll a</name>
        <dbReference type="ChEBI" id="CHEBI:58416"/>
        <label>3</label>
    </ligand>
    <ligandPart>
        <name>Mg</name>
        <dbReference type="ChEBI" id="CHEBI:25107"/>
    </ligandPart>
</feature>
<feature type="binding site" description="axial binding residue" evidence="3">
    <location>
        <position position="229"/>
    </location>
    <ligand>
        <name>chlorophyll a</name>
        <dbReference type="ChEBI" id="CHEBI:58416"/>
        <label>4</label>
    </ligand>
    <ligandPart>
        <name>Mg</name>
        <dbReference type="ChEBI" id="CHEBI:25107"/>
    </ligandPart>
</feature>
<feature type="binding site" evidence="1">
    <location>
        <position position="231"/>
    </location>
    <ligand>
        <name>chlorophyll a</name>
        <dbReference type="ChEBI" id="CHEBI:58416"/>
        <label>1</label>
    </ligand>
</feature>
<feature type="binding site" description="axial binding residue" evidence="3">
    <location>
        <position position="243"/>
    </location>
    <ligand>
        <name>chlorophyll a</name>
        <dbReference type="ChEBI" id="CHEBI:58416"/>
        <label>5</label>
    </ligand>
    <ligandPart>
        <name>Mg</name>
        <dbReference type="ChEBI" id="CHEBI:25107"/>
    </ligandPart>
</feature>
<feature type="binding site" description="axial binding residue" evidence="3">
    <location>
        <position position="258"/>
    </location>
    <ligand>
        <name>chlorophyll a</name>
        <dbReference type="ChEBI" id="CHEBI:58416"/>
        <label>6</label>
    </ligand>
    <ligandPart>
        <name>Mg</name>
        <dbReference type="ChEBI" id="CHEBI:25107"/>
    </ligandPart>
</feature>
<feature type="binding site" evidence="1">
    <location>
        <position position="267"/>
    </location>
    <ligand>
        <name>chlorophyll a</name>
        <dbReference type="ChEBI" id="CHEBI:58416"/>
        <label>6</label>
    </ligand>
</feature>
<feature type="binding site" evidence="1">
    <location>
        <position position="274"/>
    </location>
    <ligand>
        <name>chlorophyll b</name>
        <dbReference type="ChEBI" id="CHEBI:61721"/>
        <label>5</label>
    </ligand>
</feature>
<feature type="modified residue" description="N2-acetylarginine" evidence="1">
    <location>
        <position position="46"/>
    </location>
</feature>
<name>CB2A_PINSY</name>
<dbReference type="EMBL" id="X14505">
    <property type="protein sequence ID" value="CAA32657.1"/>
    <property type="molecule type" value="mRNA"/>
</dbReference>
<dbReference type="PIR" id="S08000">
    <property type="entry name" value="S08000"/>
</dbReference>
<dbReference type="SMR" id="P15193"/>
<dbReference type="GO" id="GO:0009535">
    <property type="term" value="C:chloroplast thylakoid membrane"/>
    <property type="evidence" value="ECO:0007669"/>
    <property type="project" value="UniProtKB-SubCell"/>
</dbReference>
<dbReference type="GO" id="GO:0009522">
    <property type="term" value="C:photosystem I"/>
    <property type="evidence" value="ECO:0007669"/>
    <property type="project" value="UniProtKB-KW"/>
</dbReference>
<dbReference type="GO" id="GO:0009523">
    <property type="term" value="C:photosystem II"/>
    <property type="evidence" value="ECO:0007669"/>
    <property type="project" value="UniProtKB-KW"/>
</dbReference>
<dbReference type="GO" id="GO:0016168">
    <property type="term" value="F:chlorophyll binding"/>
    <property type="evidence" value="ECO:0007669"/>
    <property type="project" value="UniProtKB-KW"/>
</dbReference>
<dbReference type="GO" id="GO:0046872">
    <property type="term" value="F:metal ion binding"/>
    <property type="evidence" value="ECO:0007669"/>
    <property type="project" value="UniProtKB-KW"/>
</dbReference>
<dbReference type="GO" id="GO:0009765">
    <property type="term" value="P:photosynthesis, light harvesting"/>
    <property type="evidence" value="ECO:0007669"/>
    <property type="project" value="InterPro"/>
</dbReference>
<dbReference type="FunFam" id="1.10.3460.10:FF:000001">
    <property type="entry name" value="Chlorophyll a-b binding protein, chloroplastic"/>
    <property type="match status" value="1"/>
</dbReference>
<dbReference type="Gene3D" id="1.10.3460.10">
    <property type="entry name" value="Chlorophyll a/b binding protein domain"/>
    <property type="match status" value="1"/>
</dbReference>
<dbReference type="InterPro" id="IPR001344">
    <property type="entry name" value="Chloro_AB-bd_pln"/>
</dbReference>
<dbReference type="InterPro" id="IPR022796">
    <property type="entry name" value="Chloroa_b-bind"/>
</dbReference>
<dbReference type="PANTHER" id="PTHR21649">
    <property type="entry name" value="CHLOROPHYLL A/B BINDING PROTEIN"/>
    <property type="match status" value="1"/>
</dbReference>
<dbReference type="Pfam" id="PF00504">
    <property type="entry name" value="Chloroa_b-bind"/>
    <property type="match status" value="1"/>
</dbReference>
<dbReference type="SUPFAM" id="SSF103511">
    <property type="entry name" value="Chlorophyll a-b binding protein"/>
    <property type="match status" value="1"/>
</dbReference>
<accession>P15193</accession>